<evidence type="ECO:0000255" key="1">
    <source>
        <dbReference type="HAMAP-Rule" id="MF_01326"/>
    </source>
</evidence>
<evidence type="ECO:0000305" key="2"/>
<accession>A3CK74</accession>
<dbReference type="EMBL" id="CP000387">
    <property type="protein sequence ID" value="ABN43579.1"/>
    <property type="molecule type" value="Genomic_DNA"/>
</dbReference>
<dbReference type="RefSeq" id="WP_002894497.1">
    <property type="nucleotide sequence ID" value="NZ_CAXTYR010000005.1"/>
</dbReference>
<dbReference type="RefSeq" id="YP_001034129.1">
    <property type="nucleotide sequence ID" value="NC_009009.1"/>
</dbReference>
<dbReference type="SMR" id="A3CK74"/>
<dbReference type="STRING" id="388919.SSA_0118"/>
<dbReference type="GeneID" id="48426574"/>
<dbReference type="KEGG" id="ssa:SSA_0118"/>
<dbReference type="PATRIC" id="fig|388919.9.peg.111"/>
<dbReference type="eggNOG" id="COG0198">
    <property type="taxonomic scope" value="Bacteria"/>
</dbReference>
<dbReference type="HOGENOM" id="CLU_093315_2_0_9"/>
<dbReference type="OrthoDB" id="9807419at2"/>
<dbReference type="Proteomes" id="UP000002148">
    <property type="component" value="Chromosome"/>
</dbReference>
<dbReference type="GO" id="GO:1990904">
    <property type="term" value="C:ribonucleoprotein complex"/>
    <property type="evidence" value="ECO:0007669"/>
    <property type="project" value="UniProtKB-KW"/>
</dbReference>
<dbReference type="GO" id="GO:0005840">
    <property type="term" value="C:ribosome"/>
    <property type="evidence" value="ECO:0007669"/>
    <property type="project" value="UniProtKB-KW"/>
</dbReference>
<dbReference type="GO" id="GO:0019843">
    <property type="term" value="F:rRNA binding"/>
    <property type="evidence" value="ECO:0007669"/>
    <property type="project" value="UniProtKB-UniRule"/>
</dbReference>
<dbReference type="GO" id="GO:0003735">
    <property type="term" value="F:structural constituent of ribosome"/>
    <property type="evidence" value="ECO:0007669"/>
    <property type="project" value="InterPro"/>
</dbReference>
<dbReference type="GO" id="GO:0006412">
    <property type="term" value="P:translation"/>
    <property type="evidence" value="ECO:0007669"/>
    <property type="project" value="UniProtKB-UniRule"/>
</dbReference>
<dbReference type="CDD" id="cd06089">
    <property type="entry name" value="KOW_RPL26"/>
    <property type="match status" value="1"/>
</dbReference>
<dbReference type="FunFam" id="2.30.30.30:FF:000004">
    <property type="entry name" value="50S ribosomal protein L24"/>
    <property type="match status" value="1"/>
</dbReference>
<dbReference type="Gene3D" id="2.30.30.30">
    <property type="match status" value="1"/>
</dbReference>
<dbReference type="HAMAP" id="MF_01326_B">
    <property type="entry name" value="Ribosomal_uL24_B"/>
    <property type="match status" value="1"/>
</dbReference>
<dbReference type="InterPro" id="IPR005824">
    <property type="entry name" value="KOW"/>
</dbReference>
<dbReference type="InterPro" id="IPR014722">
    <property type="entry name" value="Rib_uL2_dom2"/>
</dbReference>
<dbReference type="InterPro" id="IPR003256">
    <property type="entry name" value="Ribosomal_uL24"/>
</dbReference>
<dbReference type="InterPro" id="IPR005825">
    <property type="entry name" value="Ribosomal_uL24_CS"/>
</dbReference>
<dbReference type="InterPro" id="IPR041988">
    <property type="entry name" value="Ribosomal_uL24_KOW"/>
</dbReference>
<dbReference type="InterPro" id="IPR008991">
    <property type="entry name" value="Translation_prot_SH3-like_sf"/>
</dbReference>
<dbReference type="NCBIfam" id="TIGR01079">
    <property type="entry name" value="rplX_bact"/>
    <property type="match status" value="1"/>
</dbReference>
<dbReference type="PANTHER" id="PTHR12903">
    <property type="entry name" value="MITOCHONDRIAL RIBOSOMAL PROTEIN L24"/>
    <property type="match status" value="1"/>
</dbReference>
<dbReference type="Pfam" id="PF00467">
    <property type="entry name" value="KOW"/>
    <property type="match status" value="1"/>
</dbReference>
<dbReference type="Pfam" id="PF17136">
    <property type="entry name" value="ribosomal_L24"/>
    <property type="match status" value="1"/>
</dbReference>
<dbReference type="SMART" id="SM00739">
    <property type="entry name" value="KOW"/>
    <property type="match status" value="1"/>
</dbReference>
<dbReference type="SUPFAM" id="SSF50104">
    <property type="entry name" value="Translation proteins SH3-like domain"/>
    <property type="match status" value="1"/>
</dbReference>
<dbReference type="PROSITE" id="PS01108">
    <property type="entry name" value="RIBOSOMAL_L24"/>
    <property type="match status" value="1"/>
</dbReference>
<proteinExistence type="inferred from homology"/>
<reference key="1">
    <citation type="journal article" date="2007" name="J. Bacteriol.">
        <title>Genome of the opportunistic pathogen Streptococcus sanguinis.</title>
        <authorList>
            <person name="Xu P."/>
            <person name="Alves J.M."/>
            <person name="Kitten T."/>
            <person name="Brown A."/>
            <person name="Chen Z."/>
            <person name="Ozaki L.S."/>
            <person name="Manque P."/>
            <person name="Ge X."/>
            <person name="Serrano M.G."/>
            <person name="Puiu D."/>
            <person name="Hendricks S."/>
            <person name="Wang Y."/>
            <person name="Chaplin M.D."/>
            <person name="Akan D."/>
            <person name="Paik S."/>
            <person name="Peterson D.L."/>
            <person name="Macrina F.L."/>
            <person name="Buck G.A."/>
        </authorList>
    </citation>
    <scope>NUCLEOTIDE SEQUENCE [LARGE SCALE GENOMIC DNA]</scope>
    <source>
        <strain>SK36</strain>
    </source>
</reference>
<keyword id="KW-1185">Reference proteome</keyword>
<keyword id="KW-0687">Ribonucleoprotein</keyword>
<keyword id="KW-0689">Ribosomal protein</keyword>
<keyword id="KW-0694">RNA-binding</keyword>
<keyword id="KW-0699">rRNA-binding</keyword>
<comment type="function">
    <text evidence="1">One of two assembly initiator proteins, it binds directly to the 5'-end of the 23S rRNA, where it nucleates assembly of the 50S subunit.</text>
</comment>
<comment type="function">
    <text evidence="1">One of the proteins that surrounds the polypeptide exit tunnel on the outside of the subunit.</text>
</comment>
<comment type="subunit">
    <text evidence="1">Part of the 50S ribosomal subunit.</text>
</comment>
<comment type="similarity">
    <text evidence="1">Belongs to the universal ribosomal protein uL24 family.</text>
</comment>
<name>RL24_STRSV</name>
<protein>
    <recommendedName>
        <fullName evidence="1">Large ribosomal subunit protein uL24</fullName>
    </recommendedName>
    <alternativeName>
        <fullName evidence="2">50S ribosomal protein L24</fullName>
    </alternativeName>
</protein>
<sequence length="101" mass="10987">MFVKKGDKVRVIAGKDKGVEALVVTALPKVNKVVVEGVNIVKKHQKPNNENPQGAIVEKEAPIHVSNVQVLDKNGVAGRVGYKFVDGKKVRYNKKSGEVLD</sequence>
<feature type="chain" id="PRO_1000052326" description="Large ribosomal subunit protein uL24">
    <location>
        <begin position="1"/>
        <end position="101"/>
    </location>
</feature>
<organism>
    <name type="scientific">Streptococcus sanguinis (strain SK36)</name>
    <dbReference type="NCBI Taxonomy" id="388919"/>
    <lineage>
        <taxon>Bacteria</taxon>
        <taxon>Bacillati</taxon>
        <taxon>Bacillota</taxon>
        <taxon>Bacilli</taxon>
        <taxon>Lactobacillales</taxon>
        <taxon>Streptococcaceae</taxon>
        <taxon>Streptococcus</taxon>
    </lineage>
</organism>
<gene>
    <name evidence="1" type="primary">rplX</name>
    <name type="ordered locus">SSA_0118</name>
</gene>